<feature type="chain" id="PRO_0000198148" description="Ribosomal RNA large subunit methyltransferase H">
    <location>
        <begin position="1"/>
        <end position="145"/>
    </location>
</feature>
<feature type="binding site" evidence="1">
    <location>
        <position position="68"/>
    </location>
    <ligand>
        <name>S-adenosyl-L-methionine</name>
        <dbReference type="ChEBI" id="CHEBI:59789"/>
    </ligand>
</feature>
<feature type="binding site" evidence="1">
    <location>
        <position position="95"/>
    </location>
    <ligand>
        <name>S-adenosyl-L-methionine</name>
        <dbReference type="ChEBI" id="CHEBI:59789"/>
    </ligand>
</feature>
<feature type="binding site" evidence="1">
    <location>
        <begin position="113"/>
        <end position="118"/>
    </location>
    <ligand>
        <name>S-adenosyl-L-methionine</name>
        <dbReference type="ChEBI" id="CHEBI:59789"/>
    </ligand>
</feature>
<keyword id="KW-0963">Cytoplasm</keyword>
<keyword id="KW-0489">Methyltransferase</keyword>
<keyword id="KW-1185">Reference proteome</keyword>
<keyword id="KW-0698">rRNA processing</keyword>
<keyword id="KW-0949">S-adenosyl-L-methionine</keyword>
<keyword id="KW-0808">Transferase</keyword>
<gene>
    <name evidence="1" type="primary">rlmH</name>
    <name type="ordered locus">MYPU_2540</name>
</gene>
<organism>
    <name type="scientific">Mycoplasmopsis pulmonis (strain UAB CTIP)</name>
    <name type="common">Mycoplasma pulmonis</name>
    <dbReference type="NCBI Taxonomy" id="272635"/>
    <lineage>
        <taxon>Bacteria</taxon>
        <taxon>Bacillati</taxon>
        <taxon>Mycoplasmatota</taxon>
        <taxon>Mycoplasmoidales</taxon>
        <taxon>Metamycoplasmataceae</taxon>
        <taxon>Mycoplasmopsis</taxon>
    </lineage>
</organism>
<comment type="function">
    <text evidence="1">Specifically methylates the pseudouridine at position 1915 (m3Psi1915) in 23S rRNA.</text>
</comment>
<comment type="catalytic activity">
    <reaction evidence="1">
        <text>pseudouridine(1915) in 23S rRNA + S-adenosyl-L-methionine = N(3)-methylpseudouridine(1915) in 23S rRNA + S-adenosyl-L-homocysteine + H(+)</text>
        <dbReference type="Rhea" id="RHEA:42752"/>
        <dbReference type="Rhea" id="RHEA-COMP:10221"/>
        <dbReference type="Rhea" id="RHEA-COMP:10222"/>
        <dbReference type="ChEBI" id="CHEBI:15378"/>
        <dbReference type="ChEBI" id="CHEBI:57856"/>
        <dbReference type="ChEBI" id="CHEBI:59789"/>
        <dbReference type="ChEBI" id="CHEBI:65314"/>
        <dbReference type="ChEBI" id="CHEBI:74486"/>
        <dbReference type="EC" id="2.1.1.177"/>
    </reaction>
</comment>
<comment type="subunit">
    <text evidence="1">Homodimer.</text>
</comment>
<comment type="subcellular location">
    <subcellularLocation>
        <location evidence="1">Cytoplasm</location>
    </subcellularLocation>
</comment>
<comment type="similarity">
    <text evidence="1">Belongs to the RNA methyltransferase RlmH family.</text>
</comment>
<proteinExistence type="inferred from homology"/>
<reference key="1">
    <citation type="journal article" date="2001" name="Nucleic Acids Res.">
        <title>The complete genome sequence of the murine respiratory pathogen Mycoplasma pulmonis.</title>
        <authorList>
            <person name="Chambaud I."/>
            <person name="Heilig R."/>
            <person name="Ferris S."/>
            <person name="Barbe V."/>
            <person name="Samson D."/>
            <person name="Galisson F."/>
            <person name="Moszer I."/>
            <person name="Dybvig K."/>
            <person name="Wroblewski H."/>
            <person name="Viari A."/>
            <person name="Rocha E.P.C."/>
            <person name="Blanchard A."/>
        </authorList>
    </citation>
    <scope>NUCLEOTIDE SEQUENCE [LARGE SCALE GENOMIC DNA]</scope>
    <source>
        <strain>UAB CTIP</strain>
    </source>
</reference>
<protein>
    <recommendedName>
        <fullName evidence="1">Ribosomal RNA large subunit methyltransferase H</fullName>
        <ecNumber evidence="1">2.1.1.177</ecNumber>
    </recommendedName>
    <alternativeName>
        <fullName evidence="1">23S rRNA (pseudouridine1915-N3)-methyltransferase</fullName>
    </alternativeName>
    <alternativeName>
        <fullName evidence="1">23S rRNA m3Psi1915 methyltransferase</fullName>
    </alternativeName>
    <alternativeName>
        <fullName evidence="1">rRNA (pseudouridine-N3-)-methyltransferase RlmH</fullName>
    </alternativeName>
</protein>
<evidence type="ECO:0000255" key="1">
    <source>
        <dbReference type="HAMAP-Rule" id="MF_00658"/>
    </source>
</evidence>
<name>RLMH_MYCPU</name>
<accession>Q98QV7</accession>
<sequence length="145" mass="16966">MKINIISVGTLSKEFQVIFDDYIKKINFYSNVNLIKIKEFKSNNKDLIIKNETMAILEKIPKNSKVFLCSLNAEQYSSEKFALFLQEDNISFVIGGSHGVDEKMFKGAWKINFSKMTFPHQLFHLMLIEQIYRGFSILNNKIYHK</sequence>
<dbReference type="EC" id="2.1.1.177" evidence="1"/>
<dbReference type="EMBL" id="AL445563">
    <property type="protein sequence ID" value="CAC13427.1"/>
    <property type="molecule type" value="Genomic_DNA"/>
</dbReference>
<dbReference type="PIR" id="F90543">
    <property type="entry name" value="F90543"/>
</dbReference>
<dbReference type="RefSeq" id="WP_041364004.1">
    <property type="nucleotide sequence ID" value="NC_002771.1"/>
</dbReference>
<dbReference type="SMR" id="Q98QV7"/>
<dbReference type="STRING" id="272635.gene:17576844"/>
<dbReference type="KEGG" id="mpu:MYPU_2540"/>
<dbReference type="eggNOG" id="COG1576">
    <property type="taxonomic scope" value="Bacteria"/>
</dbReference>
<dbReference type="HOGENOM" id="CLU_100552_2_0_14"/>
<dbReference type="BioCyc" id="MPUL272635:G1GT6-255-MONOMER"/>
<dbReference type="Proteomes" id="UP000000528">
    <property type="component" value="Chromosome"/>
</dbReference>
<dbReference type="GO" id="GO:0005737">
    <property type="term" value="C:cytoplasm"/>
    <property type="evidence" value="ECO:0007669"/>
    <property type="project" value="UniProtKB-SubCell"/>
</dbReference>
<dbReference type="GO" id="GO:0070038">
    <property type="term" value="F:rRNA (pseudouridine-N3-)-methyltransferase activity"/>
    <property type="evidence" value="ECO:0007669"/>
    <property type="project" value="UniProtKB-UniRule"/>
</dbReference>
<dbReference type="CDD" id="cd18081">
    <property type="entry name" value="RlmH-like"/>
    <property type="match status" value="1"/>
</dbReference>
<dbReference type="Gene3D" id="3.40.1280.10">
    <property type="match status" value="1"/>
</dbReference>
<dbReference type="HAMAP" id="MF_00658">
    <property type="entry name" value="23SrRNA_methyltr_H"/>
    <property type="match status" value="1"/>
</dbReference>
<dbReference type="InterPro" id="IPR029028">
    <property type="entry name" value="Alpha/beta_knot_MTases"/>
</dbReference>
<dbReference type="InterPro" id="IPR003742">
    <property type="entry name" value="RlmH-like"/>
</dbReference>
<dbReference type="InterPro" id="IPR029026">
    <property type="entry name" value="tRNA_m1G_MTases_N"/>
</dbReference>
<dbReference type="PANTHER" id="PTHR33603">
    <property type="entry name" value="METHYLTRANSFERASE"/>
    <property type="match status" value="1"/>
</dbReference>
<dbReference type="PANTHER" id="PTHR33603:SF1">
    <property type="entry name" value="RIBOSOMAL RNA LARGE SUBUNIT METHYLTRANSFERASE H"/>
    <property type="match status" value="1"/>
</dbReference>
<dbReference type="Pfam" id="PF02590">
    <property type="entry name" value="SPOUT_MTase"/>
    <property type="match status" value="1"/>
</dbReference>
<dbReference type="PIRSF" id="PIRSF004505">
    <property type="entry name" value="MT_bac"/>
    <property type="match status" value="1"/>
</dbReference>
<dbReference type="SUPFAM" id="SSF75217">
    <property type="entry name" value="alpha/beta knot"/>
    <property type="match status" value="1"/>
</dbReference>